<accession>B2T7I7</accession>
<evidence type="ECO:0000255" key="1">
    <source>
        <dbReference type="HAMAP-Rule" id="MF_00272"/>
    </source>
</evidence>
<evidence type="ECO:0000255" key="2">
    <source>
        <dbReference type="PROSITE-ProRule" id="PRU01066"/>
    </source>
</evidence>
<protein>
    <recommendedName>
        <fullName evidence="1">Glycine cleavage system H protein</fullName>
    </recommendedName>
</protein>
<comment type="function">
    <text evidence="1">The glycine cleavage system catalyzes the degradation of glycine. The H protein shuttles the methylamine group of glycine from the P protein to the T protein.</text>
</comment>
<comment type="cofactor">
    <cofactor evidence="1">
        <name>(R)-lipoate</name>
        <dbReference type="ChEBI" id="CHEBI:83088"/>
    </cofactor>
    <text evidence="1">Binds 1 lipoyl cofactor covalently.</text>
</comment>
<comment type="subunit">
    <text evidence="1">The glycine cleavage system is composed of four proteins: P, T, L and H.</text>
</comment>
<comment type="similarity">
    <text evidence="1">Belongs to the GcvH family.</text>
</comment>
<proteinExistence type="inferred from homology"/>
<feature type="chain" id="PRO_1000114504" description="Glycine cleavage system H protein">
    <location>
        <begin position="1"/>
        <end position="126"/>
    </location>
</feature>
<feature type="domain" description="Lipoyl-binding" evidence="2">
    <location>
        <begin position="23"/>
        <end position="104"/>
    </location>
</feature>
<feature type="modified residue" description="N6-lipoyllysine" evidence="1">
    <location>
        <position position="64"/>
    </location>
</feature>
<dbReference type="EMBL" id="CP001052">
    <property type="protein sequence ID" value="ACD18268.1"/>
    <property type="molecule type" value="Genomic_DNA"/>
</dbReference>
<dbReference type="RefSeq" id="WP_012434788.1">
    <property type="nucleotide sequence ID" value="NC_010681.1"/>
</dbReference>
<dbReference type="SMR" id="B2T7I7"/>
<dbReference type="STRING" id="398527.Bphyt_3881"/>
<dbReference type="KEGG" id="bpy:Bphyt_3881"/>
<dbReference type="eggNOG" id="COG0509">
    <property type="taxonomic scope" value="Bacteria"/>
</dbReference>
<dbReference type="HOGENOM" id="CLU_097408_2_1_4"/>
<dbReference type="OrthoDB" id="9796712at2"/>
<dbReference type="Proteomes" id="UP000001739">
    <property type="component" value="Chromosome 1"/>
</dbReference>
<dbReference type="GO" id="GO:0005829">
    <property type="term" value="C:cytosol"/>
    <property type="evidence" value="ECO:0007669"/>
    <property type="project" value="TreeGrafter"/>
</dbReference>
<dbReference type="GO" id="GO:0005960">
    <property type="term" value="C:glycine cleavage complex"/>
    <property type="evidence" value="ECO:0007669"/>
    <property type="project" value="InterPro"/>
</dbReference>
<dbReference type="GO" id="GO:0019464">
    <property type="term" value="P:glycine decarboxylation via glycine cleavage system"/>
    <property type="evidence" value="ECO:0007669"/>
    <property type="project" value="UniProtKB-UniRule"/>
</dbReference>
<dbReference type="CDD" id="cd06848">
    <property type="entry name" value="GCS_H"/>
    <property type="match status" value="1"/>
</dbReference>
<dbReference type="Gene3D" id="2.40.50.100">
    <property type="match status" value="1"/>
</dbReference>
<dbReference type="HAMAP" id="MF_00272">
    <property type="entry name" value="GcvH"/>
    <property type="match status" value="1"/>
</dbReference>
<dbReference type="InterPro" id="IPR003016">
    <property type="entry name" value="2-oxoA_DH_lipoyl-BS"/>
</dbReference>
<dbReference type="InterPro" id="IPR000089">
    <property type="entry name" value="Biotin_lipoyl"/>
</dbReference>
<dbReference type="InterPro" id="IPR002930">
    <property type="entry name" value="GCV_H"/>
</dbReference>
<dbReference type="InterPro" id="IPR033753">
    <property type="entry name" value="GCV_H/Fam206"/>
</dbReference>
<dbReference type="InterPro" id="IPR017453">
    <property type="entry name" value="GCV_H_sub"/>
</dbReference>
<dbReference type="InterPro" id="IPR011053">
    <property type="entry name" value="Single_hybrid_motif"/>
</dbReference>
<dbReference type="NCBIfam" id="TIGR00527">
    <property type="entry name" value="gcvH"/>
    <property type="match status" value="1"/>
</dbReference>
<dbReference type="NCBIfam" id="NF002270">
    <property type="entry name" value="PRK01202.1"/>
    <property type="match status" value="1"/>
</dbReference>
<dbReference type="PANTHER" id="PTHR11715">
    <property type="entry name" value="GLYCINE CLEAVAGE SYSTEM H PROTEIN"/>
    <property type="match status" value="1"/>
</dbReference>
<dbReference type="PANTHER" id="PTHR11715:SF3">
    <property type="entry name" value="GLYCINE CLEAVAGE SYSTEM H PROTEIN-RELATED"/>
    <property type="match status" value="1"/>
</dbReference>
<dbReference type="Pfam" id="PF01597">
    <property type="entry name" value="GCV_H"/>
    <property type="match status" value="1"/>
</dbReference>
<dbReference type="SUPFAM" id="SSF51230">
    <property type="entry name" value="Single hybrid motif"/>
    <property type="match status" value="1"/>
</dbReference>
<dbReference type="PROSITE" id="PS50968">
    <property type="entry name" value="BIOTINYL_LIPOYL"/>
    <property type="match status" value="1"/>
</dbReference>
<dbReference type="PROSITE" id="PS00189">
    <property type="entry name" value="LIPOYL"/>
    <property type="match status" value="1"/>
</dbReference>
<organism>
    <name type="scientific">Paraburkholderia phytofirmans (strain DSM 17436 / LMG 22146 / PsJN)</name>
    <name type="common">Burkholderia phytofirmans</name>
    <dbReference type="NCBI Taxonomy" id="398527"/>
    <lineage>
        <taxon>Bacteria</taxon>
        <taxon>Pseudomonadati</taxon>
        <taxon>Pseudomonadota</taxon>
        <taxon>Betaproteobacteria</taxon>
        <taxon>Burkholderiales</taxon>
        <taxon>Burkholderiaceae</taxon>
        <taxon>Paraburkholderia</taxon>
    </lineage>
</organism>
<sequence>MSIPADLKYTESHEWVRTEADGTLTVGITDHAQEALGDIVFFEVQELGKTVTAGDTVAVIESVKAASDIYAPVSGEIIEANTAVADTPDSVNSTPYESWLFKIKPAADATQDRLIDADAYTKSIGA</sequence>
<keyword id="KW-0450">Lipoyl</keyword>
<gene>
    <name evidence="1" type="primary">gcvH</name>
    <name type="ordered locus">Bphyt_3881</name>
</gene>
<reference key="1">
    <citation type="journal article" date="2011" name="J. Bacteriol.">
        <title>Complete genome sequence of the plant growth-promoting endophyte Burkholderia phytofirmans strain PsJN.</title>
        <authorList>
            <person name="Weilharter A."/>
            <person name="Mitter B."/>
            <person name="Shin M.V."/>
            <person name="Chain P.S."/>
            <person name="Nowak J."/>
            <person name="Sessitsch A."/>
        </authorList>
    </citation>
    <scope>NUCLEOTIDE SEQUENCE [LARGE SCALE GENOMIC DNA]</scope>
    <source>
        <strain>DSM 17436 / LMG 22146 / PsJN</strain>
    </source>
</reference>
<name>GCSH_PARPJ</name>